<feature type="chain" id="PRO_1000047124" description="2,3,4,5-tetrahydropyridine-2,6-dicarboxylate N-succinyltransferase">
    <location>
        <begin position="1"/>
        <end position="275"/>
    </location>
</feature>
<feature type="binding site" evidence="1">
    <location>
        <position position="106"/>
    </location>
    <ligand>
        <name>substrate</name>
    </ligand>
</feature>
<feature type="binding site" evidence="1">
    <location>
        <position position="143"/>
    </location>
    <ligand>
        <name>substrate</name>
    </ligand>
</feature>
<evidence type="ECO:0000255" key="1">
    <source>
        <dbReference type="HAMAP-Rule" id="MF_00811"/>
    </source>
</evidence>
<reference key="1">
    <citation type="submission" date="2006-05" db="EMBL/GenBank/DDBJ databases">
        <title>Complete sequence of chromosome 3 of Burkholderia cenocepacia AU 1054.</title>
        <authorList>
            <consortium name="US DOE Joint Genome Institute"/>
            <person name="Copeland A."/>
            <person name="Lucas S."/>
            <person name="Lapidus A."/>
            <person name="Barry K."/>
            <person name="Detter J.C."/>
            <person name="Glavina del Rio T."/>
            <person name="Hammon N."/>
            <person name="Israni S."/>
            <person name="Dalin E."/>
            <person name="Tice H."/>
            <person name="Pitluck S."/>
            <person name="Chain P."/>
            <person name="Malfatti S."/>
            <person name="Shin M."/>
            <person name="Vergez L."/>
            <person name="Schmutz J."/>
            <person name="Larimer F."/>
            <person name="Land M."/>
            <person name="Hauser L."/>
            <person name="Kyrpides N."/>
            <person name="Lykidis A."/>
            <person name="LiPuma J.J."/>
            <person name="Konstantinidis K."/>
            <person name="Tiedje J.M."/>
            <person name="Richardson P."/>
        </authorList>
    </citation>
    <scope>NUCLEOTIDE SEQUENCE [LARGE SCALE GENOMIC DNA]</scope>
    <source>
        <strain>AU 1054</strain>
    </source>
</reference>
<sequence length="275" mass="29480">MSQQLQQIIDTAWENRAELSPKAAPADVREAVAHAIEQLDKGALRVAEKIDGNWTVHQWLKKAVLLSFRLEDNAPMPAGGYSQFYDKVPSKFANYTAEDFAAGGFRVVPPAIARRGSFIAKNVVLMPSYTNIGAYVDEGTMVDTWATVGSCAQIGKNVHLSGGVGIGGVLEPLQANPVIIEDNCFIGARSEVVEGVIVEENSVISMGVYLGQSTKIYDRETGEVSYGRIPAGSVVVAGNLPSKDGSHSLYCAVIVKKVDAKTRAKVGLNELLRGD</sequence>
<keyword id="KW-0012">Acyltransferase</keyword>
<keyword id="KW-0028">Amino-acid biosynthesis</keyword>
<keyword id="KW-0963">Cytoplasm</keyword>
<keyword id="KW-0220">Diaminopimelate biosynthesis</keyword>
<keyword id="KW-0457">Lysine biosynthesis</keyword>
<keyword id="KW-0677">Repeat</keyword>
<keyword id="KW-0808">Transferase</keyword>
<organism>
    <name type="scientific">Burkholderia orbicola (strain AU 1054)</name>
    <dbReference type="NCBI Taxonomy" id="331271"/>
    <lineage>
        <taxon>Bacteria</taxon>
        <taxon>Pseudomonadati</taxon>
        <taxon>Pseudomonadota</taxon>
        <taxon>Betaproteobacteria</taxon>
        <taxon>Burkholderiales</taxon>
        <taxon>Burkholderiaceae</taxon>
        <taxon>Burkholderia</taxon>
        <taxon>Burkholderia cepacia complex</taxon>
        <taxon>Burkholderia orbicola</taxon>
    </lineage>
</organism>
<comment type="catalytic activity">
    <reaction evidence="1">
        <text>(S)-2,3,4,5-tetrahydrodipicolinate + succinyl-CoA + H2O = (S)-2-succinylamino-6-oxoheptanedioate + CoA</text>
        <dbReference type="Rhea" id="RHEA:17325"/>
        <dbReference type="ChEBI" id="CHEBI:15377"/>
        <dbReference type="ChEBI" id="CHEBI:15685"/>
        <dbReference type="ChEBI" id="CHEBI:16845"/>
        <dbReference type="ChEBI" id="CHEBI:57287"/>
        <dbReference type="ChEBI" id="CHEBI:57292"/>
        <dbReference type="EC" id="2.3.1.117"/>
    </reaction>
</comment>
<comment type="pathway">
    <text evidence="1">Amino-acid biosynthesis; L-lysine biosynthesis via DAP pathway; LL-2,6-diaminopimelate from (S)-tetrahydrodipicolinate (succinylase route): step 1/3.</text>
</comment>
<comment type="subunit">
    <text evidence="1">Homotrimer.</text>
</comment>
<comment type="subcellular location">
    <subcellularLocation>
        <location evidence="1">Cytoplasm</location>
    </subcellularLocation>
</comment>
<comment type="similarity">
    <text evidence="1">Belongs to the transferase hexapeptide repeat family.</text>
</comment>
<accession>Q1BHJ3</accession>
<dbReference type="EC" id="2.3.1.117" evidence="1"/>
<dbReference type="EMBL" id="CP000380">
    <property type="protein sequence ID" value="ABF80912.1"/>
    <property type="molecule type" value="Genomic_DNA"/>
</dbReference>
<dbReference type="SMR" id="Q1BHJ3"/>
<dbReference type="HOGENOM" id="CLU_050859_0_1_4"/>
<dbReference type="UniPathway" id="UPA00034">
    <property type="reaction ID" value="UER00019"/>
</dbReference>
<dbReference type="GO" id="GO:0005737">
    <property type="term" value="C:cytoplasm"/>
    <property type="evidence" value="ECO:0007669"/>
    <property type="project" value="UniProtKB-SubCell"/>
</dbReference>
<dbReference type="GO" id="GO:0008666">
    <property type="term" value="F:2,3,4,5-tetrahydropyridine-2,6-dicarboxylate N-succinyltransferase activity"/>
    <property type="evidence" value="ECO:0007669"/>
    <property type="project" value="UniProtKB-UniRule"/>
</dbReference>
<dbReference type="GO" id="GO:0016779">
    <property type="term" value="F:nucleotidyltransferase activity"/>
    <property type="evidence" value="ECO:0007669"/>
    <property type="project" value="TreeGrafter"/>
</dbReference>
<dbReference type="GO" id="GO:0019877">
    <property type="term" value="P:diaminopimelate biosynthetic process"/>
    <property type="evidence" value="ECO:0007669"/>
    <property type="project" value="UniProtKB-UniRule"/>
</dbReference>
<dbReference type="GO" id="GO:0009089">
    <property type="term" value="P:lysine biosynthetic process via diaminopimelate"/>
    <property type="evidence" value="ECO:0007669"/>
    <property type="project" value="UniProtKB-UniRule"/>
</dbReference>
<dbReference type="CDD" id="cd03350">
    <property type="entry name" value="LbH_THP_succinylT"/>
    <property type="match status" value="1"/>
</dbReference>
<dbReference type="Gene3D" id="2.160.10.10">
    <property type="entry name" value="Hexapeptide repeat proteins"/>
    <property type="match status" value="1"/>
</dbReference>
<dbReference type="Gene3D" id="1.10.166.10">
    <property type="entry name" value="Tetrahydrodipicolinate-N-succinyltransferase, N-terminal domain"/>
    <property type="match status" value="1"/>
</dbReference>
<dbReference type="HAMAP" id="MF_00811">
    <property type="entry name" value="DapD"/>
    <property type="match status" value="1"/>
</dbReference>
<dbReference type="InterPro" id="IPR005664">
    <property type="entry name" value="DapD_Trfase_Hexpep_rpt_fam"/>
</dbReference>
<dbReference type="InterPro" id="IPR001451">
    <property type="entry name" value="Hexapep"/>
</dbReference>
<dbReference type="InterPro" id="IPR018357">
    <property type="entry name" value="Hexapep_transf_CS"/>
</dbReference>
<dbReference type="InterPro" id="IPR023180">
    <property type="entry name" value="THP_succinylTrfase_dom1"/>
</dbReference>
<dbReference type="InterPro" id="IPR037133">
    <property type="entry name" value="THP_succinylTrfase_N_sf"/>
</dbReference>
<dbReference type="InterPro" id="IPR011004">
    <property type="entry name" value="Trimer_LpxA-like_sf"/>
</dbReference>
<dbReference type="NCBIfam" id="TIGR00965">
    <property type="entry name" value="dapD"/>
    <property type="match status" value="1"/>
</dbReference>
<dbReference type="NCBIfam" id="NF008808">
    <property type="entry name" value="PRK11830.1"/>
    <property type="match status" value="1"/>
</dbReference>
<dbReference type="PANTHER" id="PTHR19136:SF52">
    <property type="entry name" value="2,3,4,5-TETRAHYDROPYRIDINE-2,6-DICARBOXYLATE N-SUCCINYLTRANSFERASE"/>
    <property type="match status" value="1"/>
</dbReference>
<dbReference type="PANTHER" id="PTHR19136">
    <property type="entry name" value="MOLYBDENUM COFACTOR GUANYLYLTRANSFERASE"/>
    <property type="match status" value="1"/>
</dbReference>
<dbReference type="Pfam" id="PF14602">
    <property type="entry name" value="Hexapep_2"/>
    <property type="match status" value="1"/>
</dbReference>
<dbReference type="Pfam" id="PF14805">
    <property type="entry name" value="THDPS_N_2"/>
    <property type="match status" value="1"/>
</dbReference>
<dbReference type="SUPFAM" id="SSF51161">
    <property type="entry name" value="Trimeric LpxA-like enzymes"/>
    <property type="match status" value="1"/>
</dbReference>
<dbReference type="PROSITE" id="PS00101">
    <property type="entry name" value="HEXAPEP_TRANSFERASES"/>
    <property type="match status" value="1"/>
</dbReference>
<protein>
    <recommendedName>
        <fullName evidence="1">2,3,4,5-tetrahydropyridine-2,6-dicarboxylate N-succinyltransferase</fullName>
        <ecNumber evidence="1">2.3.1.117</ecNumber>
    </recommendedName>
    <alternativeName>
        <fullName evidence="1">Tetrahydrodipicolinate N-succinyltransferase</fullName>
        <shortName evidence="1">THDP succinyltransferase</shortName>
        <shortName evidence="1">THP succinyltransferase</shortName>
        <shortName evidence="1">Tetrahydropicolinate succinylase</shortName>
    </alternativeName>
</protein>
<proteinExistence type="inferred from homology"/>
<name>DAPD_BURO1</name>
<gene>
    <name evidence="1" type="primary">dapD</name>
    <name type="ordered locus">Bcen_6047</name>
</gene>